<dbReference type="EMBL" id="CU329670">
    <property type="protein sequence ID" value="CAA15912.1"/>
    <property type="molecule type" value="Genomic_DNA"/>
</dbReference>
<dbReference type="PIR" id="T11639">
    <property type="entry name" value="T11639"/>
</dbReference>
<dbReference type="RefSeq" id="NP_594075.1">
    <property type="nucleotide sequence ID" value="NM_001019510.2"/>
</dbReference>
<dbReference type="PDB" id="8ESQ">
    <property type="method" value="EM"/>
    <property type="resolution" value="2.80 A"/>
    <property type="chains" value="V=1-139"/>
</dbReference>
<dbReference type="PDB" id="8ESR">
    <property type="method" value="EM"/>
    <property type="resolution" value="3.20 A"/>
    <property type="chains" value="V=1-139"/>
</dbReference>
<dbReference type="PDB" id="8ETC">
    <property type="method" value="EM"/>
    <property type="resolution" value="3.10 A"/>
    <property type="chains" value="V=1-139"/>
</dbReference>
<dbReference type="PDB" id="8ETG">
    <property type="method" value="EM"/>
    <property type="resolution" value="3.40 A"/>
    <property type="chains" value="V=1-139"/>
</dbReference>
<dbReference type="PDB" id="8ETH">
    <property type="method" value="EM"/>
    <property type="resolution" value="3.80 A"/>
    <property type="chains" value="V=1-139"/>
</dbReference>
<dbReference type="PDB" id="8ETI">
    <property type="method" value="EM"/>
    <property type="resolution" value="3.70 A"/>
    <property type="chains" value="V=1-139"/>
</dbReference>
<dbReference type="PDB" id="8ETJ">
    <property type="method" value="EM"/>
    <property type="resolution" value="3.20 A"/>
    <property type="chains" value="V=1-139"/>
</dbReference>
<dbReference type="PDB" id="8EUG">
    <property type="method" value="EM"/>
    <property type="resolution" value="2.80 A"/>
    <property type="chains" value="V=1-139"/>
</dbReference>
<dbReference type="PDB" id="8EUI">
    <property type="method" value="EM"/>
    <property type="resolution" value="3.10 A"/>
    <property type="chains" value="V=1-139"/>
</dbReference>
<dbReference type="PDB" id="8EUP">
    <property type="method" value="EM"/>
    <property type="resolution" value="3.10 A"/>
    <property type="chains" value="V=1-139"/>
</dbReference>
<dbReference type="PDB" id="8EUY">
    <property type="method" value="EM"/>
    <property type="resolution" value="3.00 A"/>
    <property type="chains" value="V=1-139"/>
</dbReference>
<dbReference type="PDB" id="8EV3">
    <property type="method" value="EM"/>
    <property type="resolution" value="3.00 A"/>
    <property type="chains" value="V=1-139"/>
</dbReference>
<dbReference type="PDBsum" id="8ESQ"/>
<dbReference type="PDBsum" id="8ESR"/>
<dbReference type="PDBsum" id="8ETC"/>
<dbReference type="PDBsum" id="8ETG"/>
<dbReference type="PDBsum" id="8ETH"/>
<dbReference type="PDBsum" id="8ETI"/>
<dbReference type="PDBsum" id="8ETJ"/>
<dbReference type="PDBsum" id="8EUG"/>
<dbReference type="PDBsum" id="8EUI"/>
<dbReference type="PDBsum" id="8EUP"/>
<dbReference type="PDBsum" id="8EUY"/>
<dbReference type="PDBsum" id="8EV3"/>
<dbReference type="SMR" id="P0CT60"/>
<dbReference type="FunCoup" id="P0CT60">
    <property type="interactions" value="583"/>
</dbReference>
<dbReference type="STRING" id="284812.P0CT60"/>
<dbReference type="iPTMnet" id="P0CT60"/>
<dbReference type="PaxDb" id="4896-SPAC3G9.03.1"/>
<dbReference type="EnsemblFungi" id="SPAC3G9.03.1">
    <property type="protein sequence ID" value="SPAC3G9.03.1:pep"/>
    <property type="gene ID" value="SPAC3G9.03"/>
</dbReference>
<dbReference type="EnsemblFungi" id="SPCC1322.11.1">
    <property type="protein sequence ID" value="SPCC1322.11.1:pep"/>
    <property type="gene ID" value="SPCC1322.11"/>
</dbReference>
<dbReference type="GeneID" id="2543453"/>
<dbReference type="KEGG" id="spo:2539286"/>
<dbReference type="KEGG" id="spo:2543453"/>
<dbReference type="PomBase" id="SPAC3G9.03">
    <property type="gene designation" value="rpl2301"/>
</dbReference>
<dbReference type="VEuPathDB" id="FungiDB:SPAC3G9.03"/>
<dbReference type="VEuPathDB" id="FungiDB:SPCC1322.11"/>
<dbReference type="eggNOG" id="KOG0901">
    <property type="taxonomic scope" value="Eukaryota"/>
</dbReference>
<dbReference type="InParanoid" id="P0CT60"/>
<dbReference type="OMA" id="IRQSKPW"/>
<dbReference type="PhylomeDB" id="P0CT60"/>
<dbReference type="Reactome" id="R-SPO-156827">
    <property type="pathway name" value="L13a-mediated translational silencing of Ceruloplasmin expression"/>
</dbReference>
<dbReference type="Reactome" id="R-SPO-1799339">
    <property type="pathway name" value="SRP-dependent cotranslational protein targeting to membrane"/>
</dbReference>
<dbReference type="Reactome" id="R-SPO-72689">
    <property type="pathway name" value="Formation of a pool of free 40S subunits"/>
</dbReference>
<dbReference type="Reactome" id="R-SPO-72706">
    <property type="pathway name" value="GTP hydrolysis and joining of the 60S ribosomal subunit"/>
</dbReference>
<dbReference type="Reactome" id="R-SPO-975956">
    <property type="pathway name" value="Nonsense Mediated Decay (NMD) independent of the Exon Junction Complex (EJC)"/>
</dbReference>
<dbReference type="Reactome" id="R-SPO-975957">
    <property type="pathway name" value="Nonsense Mediated Decay (NMD) enhanced by the Exon Junction Complex (EJC)"/>
</dbReference>
<dbReference type="PRO" id="PR:P0CT60"/>
<dbReference type="Proteomes" id="UP000002485">
    <property type="component" value="Chromosome I"/>
</dbReference>
<dbReference type="GO" id="GO:0022625">
    <property type="term" value="C:cytosolic large ribosomal subunit"/>
    <property type="evidence" value="ECO:0000318"/>
    <property type="project" value="GO_Central"/>
</dbReference>
<dbReference type="GO" id="GO:0005634">
    <property type="term" value="C:nucleus"/>
    <property type="evidence" value="ECO:0007005"/>
    <property type="project" value="PomBase"/>
</dbReference>
<dbReference type="GO" id="GO:0030684">
    <property type="term" value="C:preribosome"/>
    <property type="evidence" value="ECO:0000314"/>
    <property type="project" value="PomBase"/>
</dbReference>
<dbReference type="GO" id="GO:0070180">
    <property type="term" value="F:large ribosomal subunit rRNA binding"/>
    <property type="evidence" value="ECO:0000318"/>
    <property type="project" value="GO_Central"/>
</dbReference>
<dbReference type="GO" id="GO:0003735">
    <property type="term" value="F:structural constituent of ribosome"/>
    <property type="evidence" value="ECO:0000318"/>
    <property type="project" value="GO_Central"/>
</dbReference>
<dbReference type="GO" id="GO:0002181">
    <property type="term" value="P:cytoplasmic translation"/>
    <property type="evidence" value="ECO:0000266"/>
    <property type="project" value="PomBase"/>
</dbReference>
<dbReference type="CDD" id="cd00337">
    <property type="entry name" value="Ribosomal_uL14"/>
    <property type="match status" value="1"/>
</dbReference>
<dbReference type="FunFam" id="2.40.150.20:FF:000003">
    <property type="entry name" value="60S ribosomal protein L23"/>
    <property type="match status" value="1"/>
</dbReference>
<dbReference type="Gene3D" id="2.40.150.20">
    <property type="entry name" value="Ribosomal protein L14"/>
    <property type="match status" value="1"/>
</dbReference>
<dbReference type="HAMAP" id="MF_01367">
    <property type="entry name" value="Ribosomal_uL14"/>
    <property type="match status" value="1"/>
</dbReference>
<dbReference type="InterPro" id="IPR000218">
    <property type="entry name" value="Ribosomal_uL14"/>
</dbReference>
<dbReference type="InterPro" id="IPR019972">
    <property type="entry name" value="Ribosomal_uL14_CS"/>
</dbReference>
<dbReference type="InterPro" id="IPR036853">
    <property type="entry name" value="Ribosomal_uL14_sf"/>
</dbReference>
<dbReference type="PANTHER" id="PTHR11761">
    <property type="entry name" value="50S/60S RIBOSOMAL PROTEIN L14/L23"/>
    <property type="match status" value="1"/>
</dbReference>
<dbReference type="PANTHER" id="PTHR11761:SF8">
    <property type="entry name" value="LARGE RIBOSOMAL SUBUNIT PROTEIN UL14"/>
    <property type="match status" value="1"/>
</dbReference>
<dbReference type="Pfam" id="PF00238">
    <property type="entry name" value="Ribosomal_L14"/>
    <property type="match status" value="1"/>
</dbReference>
<dbReference type="SMART" id="SM01374">
    <property type="entry name" value="Ribosomal_L14"/>
    <property type="match status" value="1"/>
</dbReference>
<dbReference type="SUPFAM" id="SSF50193">
    <property type="entry name" value="Ribosomal protein L14"/>
    <property type="match status" value="1"/>
</dbReference>
<dbReference type="PROSITE" id="PS00049">
    <property type="entry name" value="RIBOSOMAL_L14"/>
    <property type="match status" value="1"/>
</dbReference>
<proteinExistence type="evidence at protein level"/>
<sequence>MSRGRGAASGTKYRMTLGLPVQAIMNCADNSGAKNLYIVSVFGTGARLNRLPAASCGDMVLATVKKGKPDLRKKIMPAIVVRQRKAWRRKDGVYLYFEDNAGVIVNPKGEMKGSAITGPVAKECADLWPRIASNAGTVV</sequence>
<reference key="1">
    <citation type="journal article" date="2002" name="Nature">
        <title>The genome sequence of Schizosaccharomyces pombe.</title>
        <authorList>
            <person name="Wood V."/>
            <person name="Gwilliam R."/>
            <person name="Rajandream M.A."/>
            <person name="Lyne M.H."/>
            <person name="Lyne R."/>
            <person name="Stewart A."/>
            <person name="Sgouros J.G."/>
            <person name="Peat N."/>
            <person name="Hayles J."/>
            <person name="Baker S.G."/>
            <person name="Basham D."/>
            <person name="Bowman S."/>
            <person name="Brooks K."/>
            <person name="Brown D."/>
            <person name="Brown S."/>
            <person name="Chillingworth T."/>
            <person name="Churcher C.M."/>
            <person name="Collins M."/>
            <person name="Connor R."/>
            <person name="Cronin A."/>
            <person name="Davis P."/>
            <person name="Feltwell T."/>
            <person name="Fraser A."/>
            <person name="Gentles S."/>
            <person name="Goble A."/>
            <person name="Hamlin N."/>
            <person name="Harris D.E."/>
            <person name="Hidalgo J."/>
            <person name="Hodgson G."/>
            <person name="Holroyd S."/>
            <person name="Hornsby T."/>
            <person name="Howarth S."/>
            <person name="Huckle E.J."/>
            <person name="Hunt S."/>
            <person name="Jagels K."/>
            <person name="James K.D."/>
            <person name="Jones L."/>
            <person name="Jones M."/>
            <person name="Leather S."/>
            <person name="McDonald S."/>
            <person name="McLean J."/>
            <person name="Mooney P."/>
            <person name="Moule S."/>
            <person name="Mungall K.L."/>
            <person name="Murphy L.D."/>
            <person name="Niblett D."/>
            <person name="Odell C."/>
            <person name="Oliver K."/>
            <person name="O'Neil S."/>
            <person name="Pearson D."/>
            <person name="Quail M.A."/>
            <person name="Rabbinowitsch E."/>
            <person name="Rutherford K.M."/>
            <person name="Rutter S."/>
            <person name="Saunders D."/>
            <person name="Seeger K."/>
            <person name="Sharp S."/>
            <person name="Skelton J."/>
            <person name="Simmonds M.N."/>
            <person name="Squares R."/>
            <person name="Squares S."/>
            <person name="Stevens K."/>
            <person name="Taylor K."/>
            <person name="Taylor R.G."/>
            <person name="Tivey A."/>
            <person name="Walsh S.V."/>
            <person name="Warren T."/>
            <person name="Whitehead S."/>
            <person name="Woodward J.R."/>
            <person name="Volckaert G."/>
            <person name="Aert R."/>
            <person name="Robben J."/>
            <person name="Grymonprez B."/>
            <person name="Weltjens I."/>
            <person name="Vanstreels E."/>
            <person name="Rieger M."/>
            <person name="Schaefer M."/>
            <person name="Mueller-Auer S."/>
            <person name="Gabel C."/>
            <person name="Fuchs M."/>
            <person name="Duesterhoeft A."/>
            <person name="Fritzc C."/>
            <person name="Holzer E."/>
            <person name="Moestl D."/>
            <person name="Hilbert H."/>
            <person name="Borzym K."/>
            <person name="Langer I."/>
            <person name="Beck A."/>
            <person name="Lehrach H."/>
            <person name="Reinhardt R."/>
            <person name="Pohl T.M."/>
            <person name="Eger P."/>
            <person name="Zimmermann W."/>
            <person name="Wedler H."/>
            <person name="Wambutt R."/>
            <person name="Purnelle B."/>
            <person name="Goffeau A."/>
            <person name="Cadieu E."/>
            <person name="Dreano S."/>
            <person name="Gloux S."/>
            <person name="Lelaure V."/>
            <person name="Mottier S."/>
            <person name="Galibert F."/>
            <person name="Aves S.J."/>
            <person name="Xiang Z."/>
            <person name="Hunt C."/>
            <person name="Moore K."/>
            <person name="Hurst S.M."/>
            <person name="Lucas M."/>
            <person name="Rochet M."/>
            <person name="Gaillardin C."/>
            <person name="Tallada V.A."/>
            <person name="Garzon A."/>
            <person name="Thode G."/>
            <person name="Daga R.R."/>
            <person name="Cruzado L."/>
            <person name="Jimenez J."/>
            <person name="Sanchez M."/>
            <person name="del Rey F."/>
            <person name="Benito J."/>
            <person name="Dominguez A."/>
            <person name="Revuelta J.L."/>
            <person name="Moreno S."/>
            <person name="Armstrong J."/>
            <person name="Forsburg S.L."/>
            <person name="Cerutti L."/>
            <person name="Lowe T."/>
            <person name="McCombie W.R."/>
            <person name="Paulsen I."/>
            <person name="Potashkin J."/>
            <person name="Shpakovski G.V."/>
            <person name="Ussery D."/>
            <person name="Barrell B.G."/>
            <person name="Nurse P."/>
        </authorList>
    </citation>
    <scope>NUCLEOTIDE SEQUENCE [LARGE SCALE GENOMIC DNA]</scope>
    <source>
        <strain>972 / ATCC 24843</strain>
    </source>
</reference>
<reference key="2">
    <citation type="journal article" date="2006" name="Nat. Biotechnol.">
        <title>ORFeome cloning and global analysis of protein localization in the fission yeast Schizosaccharomyces pombe.</title>
        <authorList>
            <person name="Matsuyama A."/>
            <person name="Arai R."/>
            <person name="Yashiroda Y."/>
            <person name="Shirai A."/>
            <person name="Kamata A."/>
            <person name="Sekido S."/>
            <person name="Kobayashi Y."/>
            <person name="Hashimoto A."/>
            <person name="Hamamoto M."/>
            <person name="Hiraoka Y."/>
            <person name="Horinouchi S."/>
            <person name="Yoshida M."/>
        </authorList>
    </citation>
    <scope>SUBCELLULAR LOCATION [LARGE SCALE ANALYSIS]</scope>
</reference>
<comment type="function">
    <text evidence="1">Component of the ribosome, a large ribonucleoprotein complex responsible for the synthesis of proteins in the cell. The small ribosomal subunit (SSU) binds messenger RNAs (mRNAs) and translates the encoded message by selecting cognate aminoacyl-transfer RNA (tRNA) molecules. The large subunit (LSU) contains the ribosomal catalytic site termed the peptidyl transferase center (PTC), which catalyzes the formation of peptide bonds, thereby polymerizing the amino acids delivered by tRNAs into a polypeptide chain. The nascent polypeptides leave the ribosome through a tunnel in the LSU and interact with protein factors that function in enzymatic processing, targeting, and the membrane insertion of nascent chains at the exit of the ribosomal tunnel.</text>
</comment>
<comment type="subunit">
    <text evidence="1">Component of the large ribosomal subunit (LSU). Mature yeast ribosomes consist of a small (40S) and a large (60S) subunit. The 40S small subunit contains 1 molecule of ribosomal RNA (18S rRNA) and at least 33 different proteins. The large 60S subunit contains 3 rRNA molecules (25S, 5.8S and 5S rRNA) and at least 46 different proteins.</text>
</comment>
<comment type="subcellular location">
    <subcellularLocation>
        <location evidence="1">Cytoplasm</location>
    </subcellularLocation>
    <subcellularLocation>
        <location evidence="2">Nucleus</location>
    </subcellularLocation>
</comment>
<comment type="miscellaneous">
    <text>There are 2 genes for uL14 in S.pombe.</text>
</comment>
<comment type="similarity">
    <text evidence="3">Belongs to the universal ribosomal protein uL14 family.</text>
</comment>
<accession>P0CT60</accession>
<accession>O42867</accession>
<name>RL23A_SCHPO</name>
<feature type="chain" id="PRO_0000128629" description="Large ribosomal subunit protein uL14A">
    <location>
        <begin position="1"/>
        <end position="139"/>
    </location>
</feature>
<feature type="turn" evidence="4">
    <location>
        <begin position="4"/>
        <end position="7"/>
    </location>
</feature>
<feature type="strand" evidence="5">
    <location>
        <begin position="19"/>
        <end position="22"/>
    </location>
</feature>
<feature type="strand" evidence="4">
    <location>
        <begin position="24"/>
        <end position="27"/>
    </location>
</feature>
<feature type="strand" evidence="7">
    <location>
        <begin position="29"/>
        <end position="32"/>
    </location>
</feature>
<feature type="strand" evidence="7">
    <location>
        <begin position="34"/>
        <end position="40"/>
    </location>
</feature>
<feature type="strand" evidence="7">
    <location>
        <begin position="61"/>
        <end position="66"/>
    </location>
</feature>
<feature type="helix" evidence="4">
    <location>
        <begin position="69"/>
        <end position="71"/>
    </location>
</feature>
<feature type="strand" evidence="7">
    <location>
        <begin position="78"/>
        <end position="82"/>
    </location>
</feature>
<feature type="strand" evidence="6">
    <location>
        <begin position="84"/>
        <end position="88"/>
    </location>
</feature>
<feature type="strand" evidence="7">
    <location>
        <begin position="90"/>
        <end position="92"/>
    </location>
</feature>
<feature type="strand" evidence="7">
    <location>
        <begin position="94"/>
        <end position="96"/>
    </location>
</feature>
<feature type="strand" evidence="7">
    <location>
        <begin position="101"/>
        <end position="104"/>
    </location>
</feature>
<feature type="strand" evidence="4">
    <location>
        <begin position="107"/>
        <end position="109"/>
    </location>
</feature>
<feature type="strand" evidence="7">
    <location>
        <begin position="112"/>
        <end position="114"/>
    </location>
</feature>
<feature type="strand" evidence="4">
    <location>
        <begin position="118"/>
        <end position="121"/>
    </location>
</feature>
<feature type="helix" evidence="7">
    <location>
        <begin position="122"/>
        <end position="127"/>
    </location>
</feature>
<feature type="helix" evidence="7">
    <location>
        <begin position="129"/>
        <end position="134"/>
    </location>
</feature>
<feature type="strand" evidence="8">
    <location>
        <begin position="136"/>
        <end position="139"/>
    </location>
</feature>
<gene>
    <name type="primary">rpl2301</name>
    <name type="synonym">rpl23</name>
    <name type="synonym">rpl23a</name>
    <name type="ORF">SPAC3G9.03</name>
</gene>
<keyword id="KW-0002">3D-structure</keyword>
<keyword id="KW-0963">Cytoplasm</keyword>
<keyword id="KW-0539">Nucleus</keyword>
<keyword id="KW-1185">Reference proteome</keyword>
<keyword id="KW-0687">Ribonucleoprotein</keyword>
<keyword id="KW-0689">Ribosomal protein</keyword>
<protein>
    <recommendedName>
        <fullName evidence="3">Large ribosomal subunit protein uL14A</fullName>
    </recommendedName>
    <alternativeName>
        <fullName>60S ribosomal protein L23-A</fullName>
    </alternativeName>
</protein>
<evidence type="ECO:0000250" key="1">
    <source>
        <dbReference type="UniProtKB" id="P0CX41"/>
    </source>
</evidence>
<evidence type="ECO:0000269" key="2">
    <source>
    </source>
</evidence>
<evidence type="ECO:0000305" key="3"/>
<evidence type="ECO:0007829" key="4">
    <source>
        <dbReference type="PDB" id="8ETC"/>
    </source>
</evidence>
<evidence type="ECO:0007829" key="5">
    <source>
        <dbReference type="PDB" id="8ETJ"/>
    </source>
</evidence>
<evidence type="ECO:0007829" key="6">
    <source>
        <dbReference type="PDB" id="8EUP"/>
    </source>
</evidence>
<evidence type="ECO:0007829" key="7">
    <source>
        <dbReference type="PDB" id="8EUY"/>
    </source>
</evidence>
<evidence type="ECO:0007829" key="8">
    <source>
        <dbReference type="PDB" id="8EV3"/>
    </source>
</evidence>
<organism>
    <name type="scientific">Schizosaccharomyces pombe (strain 972 / ATCC 24843)</name>
    <name type="common">Fission yeast</name>
    <dbReference type="NCBI Taxonomy" id="284812"/>
    <lineage>
        <taxon>Eukaryota</taxon>
        <taxon>Fungi</taxon>
        <taxon>Dikarya</taxon>
        <taxon>Ascomycota</taxon>
        <taxon>Taphrinomycotina</taxon>
        <taxon>Schizosaccharomycetes</taxon>
        <taxon>Schizosaccharomycetales</taxon>
        <taxon>Schizosaccharomycetaceae</taxon>
        <taxon>Schizosaccharomyces</taxon>
    </lineage>
</organism>